<keyword id="KW-0217">Developmental protein</keyword>
<keyword id="KW-0967">Endosome</keyword>
<keyword id="KW-0341">Growth regulation</keyword>
<keyword id="KW-1185">Reference proteome</keyword>
<keyword id="KW-0677">Repeat</keyword>
<keyword id="KW-0853">WD repeat</keyword>
<evidence type="ECO:0000255" key="1"/>
<evidence type="ECO:0000269" key="2">
    <source>
    </source>
</evidence>
<evidence type="ECO:0000269" key="3">
    <source>
    </source>
</evidence>
<evidence type="ECO:0000303" key="4">
    <source>
    </source>
</evidence>
<evidence type="ECO:0000305" key="5"/>
<evidence type="ECO:0000305" key="6">
    <source>
    </source>
</evidence>
<evidence type="ECO:0000305" key="7">
    <source>
    </source>
</evidence>
<evidence type="ECO:0000312" key="8">
    <source>
        <dbReference type="Araport" id="AT3G18140"/>
    </source>
</evidence>
<evidence type="ECO:0000312" key="9">
    <source>
        <dbReference type="EMBL" id="BAB02026.1"/>
    </source>
</evidence>
<sequence>MSQPSVILATASYDHTIRFWEAETGRCYRTIQYPDSHVNRLEITPDKHYLAAACNPHIRLFDVNSNSPQPVMTYDSHTNNVMAVGFQCDAKWMYSGSEDGTVKIWDLRAPGCQKEYESVAAVNTVVLHPNQTELISGDQNGNIRVWDLRANSCSCELVPEVDTAVRSLTVMWDGTMVVAANNRGTCYVWRLLRGKQTMTEFEPLHKLQAHNGHILKCLLSPANKYLATASSDKTVKIWNVDGFKLEKVLTGHQRWVWDCVFSVDGEFLVTASSDMTARLWSMPAGKEVKVYQGHHKATVCCALHD</sequence>
<accession>Q9LV27</accession>
<accession>B9DFE0</accession>
<organism>
    <name type="scientific">Arabidopsis thaliana</name>
    <name type="common">Mouse-ear cress</name>
    <dbReference type="NCBI Taxonomy" id="3702"/>
    <lineage>
        <taxon>Eukaryota</taxon>
        <taxon>Viridiplantae</taxon>
        <taxon>Streptophyta</taxon>
        <taxon>Embryophyta</taxon>
        <taxon>Tracheophyta</taxon>
        <taxon>Spermatophyta</taxon>
        <taxon>Magnoliopsida</taxon>
        <taxon>eudicotyledons</taxon>
        <taxon>Gunneridae</taxon>
        <taxon>Pentapetalae</taxon>
        <taxon>rosids</taxon>
        <taxon>malvids</taxon>
        <taxon>Brassicales</taxon>
        <taxon>Brassicaceae</taxon>
        <taxon>Camelineae</taxon>
        <taxon>Arabidopsis</taxon>
    </lineage>
</organism>
<gene>
    <name evidence="4" type="primary">LST8-1</name>
    <name evidence="8" type="ordered locus">At3g18140</name>
    <name evidence="9" type="ORF">MRC8.12</name>
</gene>
<comment type="function">
    <text evidence="2 3 6 7">Component of TORC1 complex, which is an essential cell growth regulator that controls plant development. Acts by activating transcription, protein synthesis and ribosome biogenesis, and inhibiting mRNA degradation and autophagy (Probable). Involved in regulating amino acid accumulation and the synthesis of myo-inositol and raffinose during plant adaptation to long days (PubMed:22307851). Involved in the regulation of plant growth and abscisic acid (ABA) accumulation. Acts as a positive regulation of the ABA biosynthetic genes ZEP, NCED3 and AAO3, and negative regulator of the ABA catabolic genes CYP707A2 and CYP707A3 (PubMed:26459592).</text>
</comment>
<comment type="subunit">
    <text evidence="2 6 7">The target of rapamycin complex 1 (TORC1) is composed of at least RAPTOR, LST8 and TOR (Probable). Interacts with TOR (PubMed:22307851).</text>
</comment>
<comment type="interaction">
    <interactant intactId="EBI-4453099">
        <id>Q9LV27</id>
    </interactant>
    <interactant intactId="EBI-630505">
        <id>P49677</id>
        <label>IAA1</label>
    </interactant>
    <organismsDiffer>false</organismsDiffer>
    <experiments>4</experiments>
</comment>
<comment type="interaction">
    <interactant intactId="EBI-4453099">
        <id>Q9LV27</id>
    </interactant>
    <interactant intactId="EBI-25506855">
        <id>O23160</id>
        <label>MYB73</label>
    </interactant>
    <organismsDiffer>false</organismsDiffer>
    <experiments>3</experiments>
</comment>
<comment type="interaction">
    <interactant intactId="EBI-4453099">
        <id>Q9LV27</id>
    </interactant>
    <interactant intactId="EBI-4455031">
        <id>Q05762</id>
        <label>THY-1</label>
    </interactant>
    <organismsDiffer>false</organismsDiffer>
    <experiments>10</experiments>
</comment>
<comment type="interaction">
    <interactant intactId="EBI-4453099">
        <id>Q9LV27</id>
    </interactant>
    <interactant intactId="EBI-4426557">
        <id>Q84MB2</id>
        <label>TIFY8</label>
    </interactant>
    <organismsDiffer>false</organismsDiffer>
    <experiments>4</experiments>
</comment>
<comment type="subcellular location">
    <subcellularLocation>
        <location evidence="2">Endosome</location>
    </subcellularLocation>
</comment>
<comment type="tissue specificity">
    <text evidence="2">Expressed in the root central cylinder, root tips, emerging lateral roots, vasculature of cotyledons, leaf stomata, leaf stipules, anthers, pollen, filaments, and vasculature of petals and sepals.</text>
</comment>
<comment type="disruption phenotype">
    <text evidence="2">Reduced growth and unable to flower under short day conditions. Retarded growth, bushy rosettes, development of multiple apical meristems and unable to flower under long day conditions.</text>
</comment>
<comment type="similarity">
    <text evidence="5">Belongs to the WD repeat LST8 family.</text>
</comment>
<protein>
    <recommendedName>
        <fullName evidence="5">Target of rapamycin complex subunit LST8-1</fullName>
        <shortName evidence="5">TORC subunit LST8 homolog 1</shortName>
    </recommendedName>
    <alternativeName>
        <fullName evidence="5">Lethal with SEC13 protein 8 homolog 1</fullName>
    </alternativeName>
</protein>
<dbReference type="EMBL" id="AB020749">
    <property type="protein sequence ID" value="BAB02026.1"/>
    <property type="molecule type" value="Genomic_DNA"/>
</dbReference>
<dbReference type="EMBL" id="CP002686">
    <property type="protein sequence ID" value="AEE76052.1"/>
    <property type="molecule type" value="Genomic_DNA"/>
</dbReference>
<dbReference type="EMBL" id="BT002312">
    <property type="protein sequence ID" value="AAN86145.1"/>
    <property type="molecule type" value="mRNA"/>
</dbReference>
<dbReference type="EMBL" id="AK316732">
    <property type="protein sequence ID" value="BAH19457.1"/>
    <property type="molecule type" value="mRNA"/>
</dbReference>
<dbReference type="EMBL" id="AY087463">
    <property type="protein sequence ID" value="AAM65008.1"/>
    <property type="molecule type" value="mRNA"/>
</dbReference>
<dbReference type="RefSeq" id="NP_188442.1">
    <property type="nucleotide sequence ID" value="NM_112696.3"/>
</dbReference>
<dbReference type="SMR" id="Q9LV27"/>
<dbReference type="FunCoup" id="Q9LV27">
    <property type="interactions" value="3579"/>
</dbReference>
<dbReference type="IntAct" id="Q9LV27">
    <property type="interactions" value="107"/>
</dbReference>
<dbReference type="STRING" id="3702.Q9LV27"/>
<dbReference type="PaxDb" id="3702-AT3G18140.1"/>
<dbReference type="ProteomicsDB" id="238487"/>
<dbReference type="EnsemblPlants" id="AT3G18140.1">
    <property type="protein sequence ID" value="AT3G18140.1"/>
    <property type="gene ID" value="AT3G18140"/>
</dbReference>
<dbReference type="GeneID" id="821339"/>
<dbReference type="Gramene" id="AT3G18140.1">
    <property type="protein sequence ID" value="AT3G18140.1"/>
    <property type="gene ID" value="AT3G18140"/>
</dbReference>
<dbReference type="KEGG" id="ath:AT3G18140"/>
<dbReference type="Araport" id="AT3G18140"/>
<dbReference type="TAIR" id="AT3G18140">
    <property type="gene designation" value="LST8-1"/>
</dbReference>
<dbReference type="eggNOG" id="KOG0315">
    <property type="taxonomic scope" value="Eukaryota"/>
</dbReference>
<dbReference type="HOGENOM" id="CLU_000288_57_5_1"/>
<dbReference type="InParanoid" id="Q9LV27"/>
<dbReference type="OMA" id="VQRNYKH"/>
<dbReference type="OrthoDB" id="400at2759"/>
<dbReference type="PhylomeDB" id="Q9LV27"/>
<dbReference type="PRO" id="PR:Q9LV27"/>
<dbReference type="Proteomes" id="UP000006548">
    <property type="component" value="Chromosome 3"/>
</dbReference>
<dbReference type="ExpressionAtlas" id="Q9LV27">
    <property type="expression patterns" value="baseline and differential"/>
</dbReference>
<dbReference type="GO" id="GO:0005768">
    <property type="term" value="C:endosome"/>
    <property type="evidence" value="ECO:0000314"/>
    <property type="project" value="TAIR"/>
</dbReference>
<dbReference type="GO" id="GO:0016020">
    <property type="term" value="C:membrane"/>
    <property type="evidence" value="ECO:0000314"/>
    <property type="project" value="TAIR"/>
</dbReference>
<dbReference type="GO" id="GO:0031931">
    <property type="term" value="C:TORC1 complex"/>
    <property type="evidence" value="ECO:0007669"/>
    <property type="project" value="InterPro"/>
</dbReference>
<dbReference type="GO" id="GO:0031932">
    <property type="term" value="C:TORC2 complex"/>
    <property type="evidence" value="ECO:0007669"/>
    <property type="project" value="InterPro"/>
</dbReference>
<dbReference type="GO" id="GO:0048571">
    <property type="term" value="P:long-day photoperiodism"/>
    <property type="evidence" value="ECO:0000315"/>
    <property type="project" value="TAIR"/>
</dbReference>
<dbReference type="GO" id="GO:1900088">
    <property type="term" value="P:regulation of inositol biosynthetic process"/>
    <property type="evidence" value="ECO:0000315"/>
    <property type="project" value="TAIR"/>
</dbReference>
<dbReference type="GO" id="GO:1900091">
    <property type="term" value="P:regulation of raffinose biosynthetic process"/>
    <property type="evidence" value="ECO:0000315"/>
    <property type="project" value="TAIR"/>
</dbReference>
<dbReference type="GO" id="GO:0031929">
    <property type="term" value="P:TOR signaling"/>
    <property type="evidence" value="ECO:0007669"/>
    <property type="project" value="InterPro"/>
</dbReference>
<dbReference type="CDD" id="cd00200">
    <property type="entry name" value="WD40"/>
    <property type="match status" value="1"/>
</dbReference>
<dbReference type="FunFam" id="2.130.10.10:FF:000179">
    <property type="entry name" value="Target of rapamycin complex subunit LST8"/>
    <property type="match status" value="1"/>
</dbReference>
<dbReference type="Gene3D" id="2.130.10.10">
    <property type="entry name" value="YVTN repeat-like/Quinoprotein amine dehydrogenase"/>
    <property type="match status" value="1"/>
</dbReference>
<dbReference type="InterPro" id="IPR020472">
    <property type="entry name" value="G-protein_beta_WD-40_rep"/>
</dbReference>
<dbReference type="InterPro" id="IPR037588">
    <property type="entry name" value="MLST8"/>
</dbReference>
<dbReference type="InterPro" id="IPR015943">
    <property type="entry name" value="WD40/YVTN_repeat-like_dom_sf"/>
</dbReference>
<dbReference type="InterPro" id="IPR019775">
    <property type="entry name" value="WD40_repeat_CS"/>
</dbReference>
<dbReference type="InterPro" id="IPR036322">
    <property type="entry name" value="WD40_repeat_dom_sf"/>
</dbReference>
<dbReference type="InterPro" id="IPR001680">
    <property type="entry name" value="WD40_rpt"/>
</dbReference>
<dbReference type="PANTHER" id="PTHR19842">
    <property type="entry name" value="G BETA-LIKE PROTEIN GBL"/>
    <property type="match status" value="1"/>
</dbReference>
<dbReference type="PANTHER" id="PTHR19842:SF0">
    <property type="entry name" value="TARGET OF RAPAMYCIN COMPLEX SUBUNIT LST8"/>
    <property type="match status" value="1"/>
</dbReference>
<dbReference type="Pfam" id="PF00400">
    <property type="entry name" value="WD40"/>
    <property type="match status" value="6"/>
</dbReference>
<dbReference type="PRINTS" id="PR00320">
    <property type="entry name" value="GPROTEINBRPT"/>
</dbReference>
<dbReference type="SMART" id="SM00320">
    <property type="entry name" value="WD40"/>
    <property type="match status" value="6"/>
</dbReference>
<dbReference type="SUPFAM" id="SSF50978">
    <property type="entry name" value="WD40 repeat-like"/>
    <property type="match status" value="1"/>
</dbReference>
<dbReference type="PROSITE" id="PS00678">
    <property type="entry name" value="WD_REPEATS_1"/>
    <property type="match status" value="4"/>
</dbReference>
<dbReference type="PROSITE" id="PS50082">
    <property type="entry name" value="WD_REPEATS_2"/>
    <property type="match status" value="5"/>
</dbReference>
<dbReference type="PROSITE" id="PS50294">
    <property type="entry name" value="WD_REPEATS_REGION"/>
    <property type="match status" value="1"/>
</dbReference>
<proteinExistence type="evidence at protein level"/>
<reference key="1">
    <citation type="journal article" date="2000" name="DNA Res.">
        <title>Structural analysis of Arabidopsis thaliana chromosome 3. II. Sequence features of the 4,251,695 bp regions covered by 90 P1, TAC and BAC clones.</title>
        <authorList>
            <person name="Kaneko T."/>
            <person name="Katoh T."/>
            <person name="Sato S."/>
            <person name="Nakamura Y."/>
            <person name="Asamizu E."/>
            <person name="Tabata S."/>
        </authorList>
    </citation>
    <scope>NUCLEOTIDE SEQUENCE [LARGE SCALE GENOMIC DNA]</scope>
    <source>
        <strain>cv. Columbia</strain>
    </source>
</reference>
<reference key="2">
    <citation type="journal article" date="2017" name="Plant J.">
        <title>Araport11: a complete reannotation of the Arabidopsis thaliana reference genome.</title>
        <authorList>
            <person name="Cheng C.Y."/>
            <person name="Krishnakumar V."/>
            <person name="Chan A.P."/>
            <person name="Thibaud-Nissen F."/>
            <person name="Schobel S."/>
            <person name="Town C.D."/>
        </authorList>
    </citation>
    <scope>GENOME REANNOTATION</scope>
    <source>
        <strain>cv. Columbia</strain>
    </source>
</reference>
<reference key="3">
    <citation type="journal article" date="2003" name="Science">
        <title>Empirical analysis of transcriptional activity in the Arabidopsis genome.</title>
        <authorList>
            <person name="Yamada K."/>
            <person name="Lim J."/>
            <person name="Dale J.M."/>
            <person name="Chen H."/>
            <person name="Shinn P."/>
            <person name="Palm C.J."/>
            <person name="Southwick A.M."/>
            <person name="Wu H.C."/>
            <person name="Kim C.J."/>
            <person name="Nguyen M."/>
            <person name="Pham P.K."/>
            <person name="Cheuk R.F."/>
            <person name="Karlin-Newmann G."/>
            <person name="Liu S.X."/>
            <person name="Lam B."/>
            <person name="Sakano H."/>
            <person name="Wu T."/>
            <person name="Yu G."/>
            <person name="Miranda M."/>
            <person name="Quach H.L."/>
            <person name="Tripp M."/>
            <person name="Chang C.H."/>
            <person name="Lee J.M."/>
            <person name="Toriumi M.J."/>
            <person name="Chan M.M."/>
            <person name="Tang C.C."/>
            <person name="Onodera C.S."/>
            <person name="Deng J.M."/>
            <person name="Akiyama K."/>
            <person name="Ansari Y."/>
            <person name="Arakawa T."/>
            <person name="Banh J."/>
            <person name="Banno F."/>
            <person name="Bowser L."/>
            <person name="Brooks S.Y."/>
            <person name="Carninci P."/>
            <person name="Chao Q."/>
            <person name="Choy N."/>
            <person name="Enju A."/>
            <person name="Goldsmith A.D."/>
            <person name="Gurjal M."/>
            <person name="Hansen N.F."/>
            <person name="Hayashizaki Y."/>
            <person name="Johnson-Hopson C."/>
            <person name="Hsuan V.W."/>
            <person name="Iida K."/>
            <person name="Karnes M."/>
            <person name="Khan S."/>
            <person name="Koesema E."/>
            <person name="Ishida J."/>
            <person name="Jiang P.X."/>
            <person name="Jones T."/>
            <person name="Kawai J."/>
            <person name="Kamiya A."/>
            <person name="Meyers C."/>
            <person name="Nakajima M."/>
            <person name="Narusaka M."/>
            <person name="Seki M."/>
            <person name="Sakurai T."/>
            <person name="Satou M."/>
            <person name="Tamse R."/>
            <person name="Vaysberg M."/>
            <person name="Wallender E.K."/>
            <person name="Wong C."/>
            <person name="Yamamura Y."/>
            <person name="Yuan S."/>
            <person name="Shinozaki K."/>
            <person name="Davis R.W."/>
            <person name="Theologis A."/>
            <person name="Ecker J.R."/>
        </authorList>
    </citation>
    <scope>NUCLEOTIDE SEQUENCE [LARGE SCALE MRNA]</scope>
    <source>
        <strain>cv. Columbia</strain>
    </source>
</reference>
<reference key="4">
    <citation type="journal article" date="2009" name="DNA Res.">
        <title>Analysis of multiple occurrences of alternative splicing events in Arabidopsis thaliana using novel sequenced full-length cDNAs.</title>
        <authorList>
            <person name="Iida K."/>
            <person name="Fukami-Kobayashi K."/>
            <person name="Toyoda A."/>
            <person name="Sakaki Y."/>
            <person name="Kobayashi M."/>
            <person name="Seki M."/>
            <person name="Shinozaki K."/>
        </authorList>
    </citation>
    <scope>NUCLEOTIDE SEQUENCE [LARGE SCALE MRNA]</scope>
    <source>
        <strain>cv. Columbia</strain>
    </source>
</reference>
<reference key="5">
    <citation type="submission" date="2002-03" db="EMBL/GenBank/DDBJ databases">
        <title>Full-length cDNA from Arabidopsis thaliana.</title>
        <authorList>
            <person name="Brover V.V."/>
            <person name="Troukhan M.E."/>
            <person name="Alexandrov N.A."/>
            <person name="Lu Y.-P."/>
            <person name="Flavell R.B."/>
            <person name="Feldmann K.A."/>
        </authorList>
    </citation>
    <scope>NUCLEOTIDE SEQUENCE [LARGE SCALE MRNA]</scope>
</reference>
<reference key="6">
    <citation type="journal article" date="2012" name="Plant Cell">
        <title>Mutations in the Arabidopsis homolog of LST8/GbetaL, a partner of the target of Rapamycin kinase, impair plant growth, flowering, and metabolic adaptation to long days.</title>
        <authorList>
            <person name="Moreau M."/>
            <person name="Azzopardi M."/>
            <person name="Clement G."/>
            <person name="Dobrenel T."/>
            <person name="Marchive C."/>
            <person name="Renne C."/>
            <person name="Martin-Magniette M.-L."/>
            <person name="Taconnat L."/>
            <person name="Renou J.-P."/>
            <person name="Robaglia C."/>
            <person name="Meyer C."/>
        </authorList>
    </citation>
    <scope>FUNCTION</scope>
    <scope>SUBUNIT</scope>
    <scope>INTERACTION WITH TOR</scope>
    <scope>SUBCELLULAR LOCATION</scope>
    <scope>TISSUE SPECIFICITY</scope>
    <scope>DISRUPTION PHENOTYPE</scope>
</reference>
<reference key="7">
    <citation type="journal article" date="2015" name="Biochem. Biophys. Res. Commun.">
        <title>Mutations in the Arabidopsis Lst8 and Raptor genes encoding partners of the TOR complex, or inhibition of TOR activity decrease abscisic acid (ABA) synthesis.</title>
        <authorList>
            <person name="Kravchenko A."/>
            <person name="Citerne S."/>
            <person name="Jehanno I."/>
            <person name="Bersimbaev R.I."/>
            <person name="Veit B."/>
            <person name="Meyer C."/>
            <person name="Leprince A.S."/>
        </authorList>
    </citation>
    <scope>FUNCTION</scope>
    <scope>SUBUNIT</scope>
</reference>
<name>LST81_ARATH</name>
<feature type="chain" id="PRO_0000444992" description="Target of rapamycin complex subunit LST8-1">
    <location>
        <begin position="1"/>
        <end position="305"/>
    </location>
</feature>
<feature type="repeat" description="WD 1" evidence="1">
    <location>
        <begin position="1"/>
        <end position="30"/>
    </location>
</feature>
<feature type="repeat" description="WD 2" evidence="1">
    <location>
        <begin position="33"/>
        <end position="71"/>
    </location>
</feature>
<feature type="repeat" description="WD 3" evidence="1">
    <location>
        <begin position="76"/>
        <end position="115"/>
    </location>
</feature>
<feature type="repeat" description="WD 4" evidence="1">
    <location>
        <begin position="117"/>
        <end position="156"/>
    </location>
</feature>
<feature type="repeat" description="WD 5" evidence="1">
    <location>
        <begin position="160"/>
        <end position="199"/>
    </location>
</feature>
<feature type="repeat" description="WD 6" evidence="1">
    <location>
        <begin position="209"/>
        <end position="248"/>
    </location>
</feature>
<feature type="repeat" description="WD 7" evidence="1">
    <location>
        <begin position="251"/>
        <end position="292"/>
    </location>
</feature>
<feature type="sequence conflict" description="In Ref. 4; BAH19457." evidence="5" ref="4">
    <original>D</original>
    <variation>E</variation>
    <location>
        <position position="99"/>
    </location>
</feature>